<proteinExistence type="inferred from homology"/>
<reference key="1">
    <citation type="submission" date="2008-02" db="EMBL/GenBank/DDBJ databases">
        <title>Complete sequence of Yersinia pseudotuberculosis YPIII.</title>
        <authorList>
            <consortium name="US DOE Joint Genome Institute"/>
            <person name="Copeland A."/>
            <person name="Lucas S."/>
            <person name="Lapidus A."/>
            <person name="Glavina del Rio T."/>
            <person name="Dalin E."/>
            <person name="Tice H."/>
            <person name="Bruce D."/>
            <person name="Goodwin L."/>
            <person name="Pitluck S."/>
            <person name="Munk A.C."/>
            <person name="Brettin T."/>
            <person name="Detter J.C."/>
            <person name="Han C."/>
            <person name="Tapia R."/>
            <person name="Schmutz J."/>
            <person name="Larimer F."/>
            <person name="Land M."/>
            <person name="Hauser L."/>
            <person name="Challacombe J.F."/>
            <person name="Green L."/>
            <person name="Lindler L.E."/>
            <person name="Nikolich M.P."/>
            <person name="Richardson P."/>
        </authorList>
    </citation>
    <scope>NUCLEOTIDE SEQUENCE [LARGE SCALE GENOMIC DNA]</scope>
    <source>
        <strain>YPIII</strain>
    </source>
</reference>
<sequence length="443" mass="50882">METLASLYNEHLSTLQQRTRDVLERHQLDALLIHSGELQRLFLDDRDYPFKVNPQFKAWVPVTEVPNCWLWVDGVNTPKLWFYSPVDYWHSVEPLPDSFWTKNIDVQPLLNADDIAQQLPVQRERVAYIGYAQQRAQALGFSAENINPQPVLDYLHYYRSYKTDYELACMREAQKTAVVGHRAAYEAFQSGMSEFDINLAYLMATGHRDTDVPYDNIVALNEHSAVLHYTILQHQPPAEIRSFLIDAGAEYNGYAADLTRTYAADRDSDFAALISDLNTEQLALIDTIKSGERYTDYHVQMHQRIAKLLRTHNLVTGISEEAMVEQGITCPFLPHGLGHPLGLQVHDTAGFMQDDKGTNLNAPSKYPYLRCTRVLQPRMVLTIEPGLYFIDSLLAPWRIGEFSKHFNWDRIDALKPYGGIRIEDNIVIHDKRVENMTRDLKLA</sequence>
<evidence type="ECO:0000255" key="1">
    <source>
        <dbReference type="HAMAP-Rule" id="MF_01279"/>
    </source>
</evidence>
<name>PEPQ_YERPY</name>
<comment type="function">
    <text evidence="1">Splits dipeptides with a prolyl residue in the C-terminal position.</text>
</comment>
<comment type="catalytic activity">
    <reaction evidence="1">
        <text>Xaa-L-Pro dipeptide + H2O = an L-alpha-amino acid + L-proline</text>
        <dbReference type="Rhea" id="RHEA:76407"/>
        <dbReference type="ChEBI" id="CHEBI:15377"/>
        <dbReference type="ChEBI" id="CHEBI:59869"/>
        <dbReference type="ChEBI" id="CHEBI:60039"/>
        <dbReference type="ChEBI" id="CHEBI:195196"/>
        <dbReference type="EC" id="3.4.13.9"/>
    </reaction>
</comment>
<comment type="cofactor">
    <cofactor evidence="1">
        <name>Mn(2+)</name>
        <dbReference type="ChEBI" id="CHEBI:29035"/>
    </cofactor>
    <text evidence="1">Binds 2 manganese ions per subunit.</text>
</comment>
<comment type="similarity">
    <text evidence="1">Belongs to the peptidase M24B family. Bacterial-type prolidase subfamily.</text>
</comment>
<protein>
    <recommendedName>
        <fullName evidence="1">Xaa-Pro dipeptidase</fullName>
        <shortName evidence="1">X-Pro dipeptidase</shortName>
        <ecNumber evidence="1">3.4.13.9</ecNumber>
    </recommendedName>
    <alternativeName>
        <fullName evidence="1">Imidodipeptidase</fullName>
    </alternativeName>
    <alternativeName>
        <fullName evidence="1">Proline dipeptidase</fullName>
        <shortName evidence="1">Prolidase</shortName>
    </alternativeName>
</protein>
<gene>
    <name evidence="1" type="primary">pepQ</name>
    <name type="ordered locus">YPK_3932</name>
</gene>
<dbReference type="EC" id="3.4.13.9" evidence="1"/>
<dbReference type="EMBL" id="CP000950">
    <property type="protein sequence ID" value="ACA70195.1"/>
    <property type="molecule type" value="Genomic_DNA"/>
</dbReference>
<dbReference type="RefSeq" id="WP_011191548.1">
    <property type="nucleotide sequence ID" value="NZ_CP009792.1"/>
</dbReference>
<dbReference type="SMR" id="B1JP62"/>
<dbReference type="MEROPS" id="M24.003"/>
<dbReference type="KEGG" id="ypy:YPK_3932"/>
<dbReference type="PATRIC" id="fig|502800.11.peg.281"/>
<dbReference type="GO" id="GO:0005829">
    <property type="term" value="C:cytosol"/>
    <property type="evidence" value="ECO:0007669"/>
    <property type="project" value="TreeGrafter"/>
</dbReference>
<dbReference type="GO" id="GO:0004177">
    <property type="term" value="F:aminopeptidase activity"/>
    <property type="evidence" value="ECO:0007669"/>
    <property type="project" value="TreeGrafter"/>
</dbReference>
<dbReference type="GO" id="GO:0046872">
    <property type="term" value="F:metal ion binding"/>
    <property type="evidence" value="ECO:0007669"/>
    <property type="project" value="UniProtKB-KW"/>
</dbReference>
<dbReference type="GO" id="GO:0008235">
    <property type="term" value="F:metalloexopeptidase activity"/>
    <property type="evidence" value="ECO:0007669"/>
    <property type="project" value="UniProtKB-UniRule"/>
</dbReference>
<dbReference type="GO" id="GO:0016795">
    <property type="term" value="F:phosphoric triester hydrolase activity"/>
    <property type="evidence" value="ECO:0007669"/>
    <property type="project" value="InterPro"/>
</dbReference>
<dbReference type="GO" id="GO:0102009">
    <property type="term" value="F:proline dipeptidase activity"/>
    <property type="evidence" value="ECO:0007669"/>
    <property type="project" value="UniProtKB-EC"/>
</dbReference>
<dbReference type="GO" id="GO:0006508">
    <property type="term" value="P:proteolysis"/>
    <property type="evidence" value="ECO:0007669"/>
    <property type="project" value="UniProtKB-KW"/>
</dbReference>
<dbReference type="Gene3D" id="3.90.230.10">
    <property type="entry name" value="Creatinase/methionine aminopeptidase superfamily"/>
    <property type="match status" value="1"/>
</dbReference>
<dbReference type="Gene3D" id="3.40.350.10">
    <property type="entry name" value="Creatinase/prolidase N-terminal domain"/>
    <property type="match status" value="1"/>
</dbReference>
<dbReference type="HAMAP" id="MF_01279">
    <property type="entry name" value="X_Pro_dipeptid"/>
    <property type="match status" value="1"/>
</dbReference>
<dbReference type="InterPro" id="IPR029149">
    <property type="entry name" value="Creatin/AminoP/Spt16_N"/>
</dbReference>
<dbReference type="InterPro" id="IPR036005">
    <property type="entry name" value="Creatinase/aminopeptidase-like"/>
</dbReference>
<dbReference type="InterPro" id="IPR048819">
    <property type="entry name" value="PepQ_N"/>
</dbReference>
<dbReference type="InterPro" id="IPR000994">
    <property type="entry name" value="Pept_M24"/>
</dbReference>
<dbReference type="InterPro" id="IPR001131">
    <property type="entry name" value="Peptidase_M24B_aminopep-P_CS"/>
</dbReference>
<dbReference type="InterPro" id="IPR052433">
    <property type="entry name" value="X-Pro_dipept-like"/>
</dbReference>
<dbReference type="InterPro" id="IPR022846">
    <property type="entry name" value="X_Pro_dipept"/>
</dbReference>
<dbReference type="NCBIfam" id="NF010133">
    <property type="entry name" value="PRK13607.1"/>
    <property type="match status" value="1"/>
</dbReference>
<dbReference type="PANTHER" id="PTHR43226">
    <property type="entry name" value="XAA-PRO AMINOPEPTIDASE 3"/>
    <property type="match status" value="1"/>
</dbReference>
<dbReference type="PANTHER" id="PTHR43226:SF8">
    <property type="entry name" value="XAA-PRO DIPEPTIDASE"/>
    <property type="match status" value="1"/>
</dbReference>
<dbReference type="Pfam" id="PF21216">
    <property type="entry name" value="PepQ_N"/>
    <property type="match status" value="1"/>
</dbReference>
<dbReference type="Pfam" id="PF00557">
    <property type="entry name" value="Peptidase_M24"/>
    <property type="match status" value="1"/>
</dbReference>
<dbReference type="SUPFAM" id="SSF55920">
    <property type="entry name" value="Creatinase/aminopeptidase"/>
    <property type="match status" value="1"/>
</dbReference>
<dbReference type="PROSITE" id="PS00491">
    <property type="entry name" value="PROLINE_PEPTIDASE"/>
    <property type="match status" value="1"/>
</dbReference>
<accession>B1JP62</accession>
<keyword id="KW-0224">Dipeptidase</keyword>
<keyword id="KW-0378">Hydrolase</keyword>
<keyword id="KW-0464">Manganese</keyword>
<keyword id="KW-0479">Metal-binding</keyword>
<keyword id="KW-0482">Metalloprotease</keyword>
<keyword id="KW-0645">Protease</keyword>
<organism>
    <name type="scientific">Yersinia pseudotuberculosis serotype O:3 (strain YPIII)</name>
    <dbReference type="NCBI Taxonomy" id="502800"/>
    <lineage>
        <taxon>Bacteria</taxon>
        <taxon>Pseudomonadati</taxon>
        <taxon>Pseudomonadota</taxon>
        <taxon>Gammaproteobacteria</taxon>
        <taxon>Enterobacterales</taxon>
        <taxon>Yersiniaceae</taxon>
        <taxon>Yersinia</taxon>
    </lineage>
</organism>
<feature type="chain" id="PRO_1000140339" description="Xaa-Pro dipeptidase">
    <location>
        <begin position="1"/>
        <end position="443"/>
    </location>
</feature>
<feature type="binding site" evidence="1">
    <location>
        <position position="246"/>
    </location>
    <ligand>
        <name>Mn(2+)</name>
        <dbReference type="ChEBI" id="CHEBI:29035"/>
        <label>2</label>
    </ligand>
</feature>
<feature type="binding site" evidence="1">
    <location>
        <position position="257"/>
    </location>
    <ligand>
        <name>Mn(2+)</name>
        <dbReference type="ChEBI" id="CHEBI:29035"/>
        <label>1</label>
    </ligand>
</feature>
<feature type="binding site" evidence="1">
    <location>
        <position position="257"/>
    </location>
    <ligand>
        <name>Mn(2+)</name>
        <dbReference type="ChEBI" id="CHEBI:29035"/>
        <label>2</label>
    </ligand>
</feature>
<feature type="binding site" evidence="1">
    <location>
        <position position="339"/>
    </location>
    <ligand>
        <name>Mn(2+)</name>
        <dbReference type="ChEBI" id="CHEBI:29035"/>
        <label>1</label>
    </ligand>
</feature>
<feature type="binding site" evidence="1">
    <location>
        <position position="384"/>
    </location>
    <ligand>
        <name>Mn(2+)</name>
        <dbReference type="ChEBI" id="CHEBI:29035"/>
        <label>1</label>
    </ligand>
</feature>
<feature type="binding site" evidence="1">
    <location>
        <position position="423"/>
    </location>
    <ligand>
        <name>Mn(2+)</name>
        <dbReference type="ChEBI" id="CHEBI:29035"/>
        <label>1</label>
    </ligand>
</feature>
<feature type="binding site" evidence="1">
    <location>
        <position position="423"/>
    </location>
    <ligand>
        <name>Mn(2+)</name>
        <dbReference type="ChEBI" id="CHEBI:29035"/>
        <label>2</label>
    </ligand>
</feature>